<keyword id="KW-0067">ATP-binding</keyword>
<keyword id="KW-0418">Kinase</keyword>
<keyword id="KW-0460">Magnesium</keyword>
<keyword id="KW-0479">Metal-binding</keyword>
<keyword id="KW-0547">Nucleotide-binding</keyword>
<keyword id="KW-0662">Pyridine nucleotide biosynthesis</keyword>
<keyword id="KW-1185">Reference proteome</keyword>
<keyword id="KW-0808">Transferase</keyword>
<gene>
    <name type="primary">Nmrk2</name>
    <name type="synonym">Itgb1bp3</name>
    <name type="synonym">Nrk2</name>
</gene>
<organism>
    <name type="scientific">Mus musculus</name>
    <name type="common">Mouse</name>
    <dbReference type="NCBI Taxonomy" id="10090"/>
    <lineage>
        <taxon>Eukaryota</taxon>
        <taxon>Metazoa</taxon>
        <taxon>Chordata</taxon>
        <taxon>Craniata</taxon>
        <taxon>Vertebrata</taxon>
        <taxon>Euteleostomi</taxon>
        <taxon>Mammalia</taxon>
        <taxon>Eutheria</taxon>
        <taxon>Euarchontoglires</taxon>
        <taxon>Glires</taxon>
        <taxon>Rodentia</taxon>
        <taxon>Myomorpha</taxon>
        <taxon>Muroidea</taxon>
        <taxon>Muridae</taxon>
        <taxon>Murinae</taxon>
        <taxon>Mus</taxon>
        <taxon>Mus</taxon>
    </lineage>
</organism>
<sequence length="195" mass="22375">MKLIIGIGGVTNGGKTTLTNSLLKALPNCCVIHQDDFFKPQDQIAVGEDGFKQWDVLESLDMETMLSTVQAWVKDPHKFARAHGVSLQSGASDTHVLLLEGFLLYSYRPLVDLYSQRYFLTVPYEECKRRRRSRTYMVPDPPGLFDGHVWPMYQKYRREMEQDGVEVVYLDGMKSPEGLFHQVLEDIQNRLLNTS</sequence>
<dbReference type="EC" id="2.7.1.22" evidence="2"/>
<dbReference type="EC" id="2.7.1.173" evidence="2"/>
<dbReference type="EMBL" id="AK009352">
    <property type="protein sequence ID" value="BAB26235.1"/>
    <property type="molecule type" value="mRNA"/>
</dbReference>
<dbReference type="EMBL" id="AK137483">
    <property type="protein sequence ID" value="BAE23375.1"/>
    <property type="molecule type" value="mRNA"/>
</dbReference>
<dbReference type="EMBL" id="BC119244">
    <property type="protein sequence ID" value="AAI19245.1"/>
    <property type="molecule type" value="mRNA"/>
</dbReference>
<dbReference type="EMBL" id="BC119246">
    <property type="protein sequence ID" value="AAI19247.1"/>
    <property type="molecule type" value="mRNA"/>
</dbReference>
<dbReference type="CCDS" id="CCDS24046.1"/>
<dbReference type="RefSeq" id="NP_081396.1">
    <property type="nucleotide sequence ID" value="NM_027120.2"/>
</dbReference>
<dbReference type="SMR" id="Q9D7C9"/>
<dbReference type="BioGRID" id="213534">
    <property type="interactions" value="1"/>
</dbReference>
<dbReference type="FunCoup" id="Q9D7C9">
    <property type="interactions" value="769"/>
</dbReference>
<dbReference type="STRING" id="10090.ENSMUSP00000005069"/>
<dbReference type="PhosphoSitePlus" id="Q9D7C9"/>
<dbReference type="PaxDb" id="10090-ENSMUSP00000005069"/>
<dbReference type="ProteomicsDB" id="293734"/>
<dbReference type="Antibodypedia" id="23411">
    <property type="antibodies" value="110 antibodies from 19 providers"/>
</dbReference>
<dbReference type="DNASU" id="69564"/>
<dbReference type="Ensembl" id="ENSMUST00000005069.8">
    <property type="protein sequence ID" value="ENSMUSP00000005069.7"/>
    <property type="gene ID" value="ENSMUSG00000004939.8"/>
</dbReference>
<dbReference type="GeneID" id="69564"/>
<dbReference type="KEGG" id="mmu:69564"/>
<dbReference type="UCSC" id="uc007ggn.1">
    <property type="organism name" value="mouse"/>
</dbReference>
<dbReference type="AGR" id="MGI:1916814"/>
<dbReference type="CTD" id="27231"/>
<dbReference type="MGI" id="MGI:1916814">
    <property type="gene designation" value="Nmrk2"/>
</dbReference>
<dbReference type="VEuPathDB" id="HostDB:ENSMUSG00000004939"/>
<dbReference type="eggNOG" id="KOG3308">
    <property type="taxonomic scope" value="Eukaryota"/>
</dbReference>
<dbReference type="GeneTree" id="ENSGT00940000159842"/>
<dbReference type="HOGENOM" id="CLU_058668_0_0_1"/>
<dbReference type="InParanoid" id="Q9D7C9"/>
<dbReference type="OMA" id="MDMEAMT"/>
<dbReference type="OrthoDB" id="10041966at2759"/>
<dbReference type="PhylomeDB" id="Q9D7C9"/>
<dbReference type="TreeFam" id="TF105395"/>
<dbReference type="BRENDA" id="2.7.1.22">
    <property type="organism ID" value="3474"/>
</dbReference>
<dbReference type="Reactome" id="R-MMU-196807">
    <property type="pathway name" value="Nicotinate metabolism"/>
</dbReference>
<dbReference type="UniPathway" id="UPA00253"/>
<dbReference type="BioGRID-ORCS" id="69564">
    <property type="hits" value="2 hits in 76 CRISPR screens"/>
</dbReference>
<dbReference type="PRO" id="PR:Q9D7C9"/>
<dbReference type="Proteomes" id="UP000000589">
    <property type="component" value="Chromosome 10"/>
</dbReference>
<dbReference type="RNAct" id="Q9D7C9">
    <property type="molecule type" value="protein"/>
</dbReference>
<dbReference type="Bgee" id="ENSMUSG00000004939">
    <property type="expression patterns" value="Expressed in knee joint and 42 other cell types or tissues"/>
</dbReference>
<dbReference type="GO" id="GO:0005829">
    <property type="term" value="C:cytosol"/>
    <property type="evidence" value="ECO:0000314"/>
    <property type="project" value="MGI"/>
</dbReference>
<dbReference type="GO" id="GO:0005654">
    <property type="term" value="C:nucleoplasm"/>
    <property type="evidence" value="ECO:0007669"/>
    <property type="project" value="Ensembl"/>
</dbReference>
<dbReference type="GO" id="GO:0005886">
    <property type="term" value="C:plasma membrane"/>
    <property type="evidence" value="ECO:0007669"/>
    <property type="project" value="Ensembl"/>
</dbReference>
<dbReference type="GO" id="GO:0005524">
    <property type="term" value="F:ATP binding"/>
    <property type="evidence" value="ECO:0007669"/>
    <property type="project" value="UniProtKB-KW"/>
</dbReference>
<dbReference type="GO" id="GO:0046872">
    <property type="term" value="F:metal ion binding"/>
    <property type="evidence" value="ECO:0007669"/>
    <property type="project" value="UniProtKB-KW"/>
</dbReference>
<dbReference type="GO" id="GO:0034317">
    <property type="term" value="F:nicotinate riboside kinase activity"/>
    <property type="evidence" value="ECO:0007669"/>
    <property type="project" value="UniProtKB-EC"/>
</dbReference>
<dbReference type="GO" id="GO:0050262">
    <property type="term" value="F:ribosylnicotinamide kinase activity"/>
    <property type="evidence" value="ECO:0000316"/>
    <property type="project" value="MGI"/>
</dbReference>
<dbReference type="GO" id="GO:0061769">
    <property type="term" value="F:ribosylnicotinate kinase activity"/>
    <property type="evidence" value="ECO:0000316"/>
    <property type="project" value="MGI"/>
</dbReference>
<dbReference type="GO" id="GO:0034355">
    <property type="term" value="P:NAD biosynthetic process via the salvage pathway"/>
    <property type="evidence" value="ECO:0000316"/>
    <property type="project" value="MGI"/>
</dbReference>
<dbReference type="GO" id="GO:0006741">
    <property type="term" value="P:NADP biosynthetic process"/>
    <property type="evidence" value="ECO:0000315"/>
    <property type="project" value="MGI"/>
</dbReference>
<dbReference type="GO" id="GO:0045662">
    <property type="term" value="P:negative regulation of myoblast differentiation"/>
    <property type="evidence" value="ECO:0000314"/>
    <property type="project" value="MGI"/>
</dbReference>
<dbReference type="CDD" id="cd02024">
    <property type="entry name" value="NRK1"/>
    <property type="match status" value="1"/>
</dbReference>
<dbReference type="FunFam" id="3.40.50.300:FF:000853">
    <property type="entry name" value="Nicotinamide riboside kinase 1"/>
    <property type="match status" value="1"/>
</dbReference>
<dbReference type="Gene3D" id="3.40.50.300">
    <property type="entry name" value="P-loop containing nucleotide triphosphate hydrolases"/>
    <property type="match status" value="1"/>
</dbReference>
<dbReference type="InterPro" id="IPR027417">
    <property type="entry name" value="P-loop_NTPase"/>
</dbReference>
<dbReference type="PANTHER" id="PTHR10285">
    <property type="entry name" value="URIDINE KINASE"/>
    <property type="match status" value="1"/>
</dbReference>
<dbReference type="Pfam" id="PF13238">
    <property type="entry name" value="AAA_18"/>
    <property type="match status" value="1"/>
</dbReference>
<dbReference type="SUPFAM" id="SSF52540">
    <property type="entry name" value="P-loop containing nucleoside triphosphate hydrolases"/>
    <property type="match status" value="1"/>
</dbReference>
<comment type="function">
    <text evidence="1 3">Catalyzes the phosphorylation of nicotinamide riboside (NR) and nicotinic acid riboside (NaR) to form nicotinamide mononucleotide (NMN) and nicotinic acid mononucleotide (NaMN). Reduces laminin matrix deposition and cell adhesion to laminin, but not to fibronectin. Involved in the regulation of PXN at the protein level and of PXN tyrosine phosphorylation. May play a role in the regulation of terminal myogenesis (By similarity).</text>
</comment>
<comment type="catalytic activity">
    <reaction evidence="2">
        <text>beta-nicotinamide D-riboside + ATP = beta-nicotinamide D-ribonucleotide + ADP + H(+)</text>
        <dbReference type="Rhea" id="RHEA:14017"/>
        <dbReference type="ChEBI" id="CHEBI:14649"/>
        <dbReference type="ChEBI" id="CHEBI:15378"/>
        <dbReference type="ChEBI" id="CHEBI:15927"/>
        <dbReference type="ChEBI" id="CHEBI:30616"/>
        <dbReference type="ChEBI" id="CHEBI:456216"/>
        <dbReference type="EC" id="2.7.1.22"/>
    </reaction>
</comment>
<comment type="catalytic activity">
    <reaction evidence="2">
        <text>beta-D-ribosylnicotinate + ATP = nicotinate beta-D-ribonucleotide + ADP + H(+)</text>
        <dbReference type="Rhea" id="RHEA:25568"/>
        <dbReference type="ChEBI" id="CHEBI:15378"/>
        <dbReference type="ChEBI" id="CHEBI:30616"/>
        <dbReference type="ChEBI" id="CHEBI:57502"/>
        <dbReference type="ChEBI" id="CHEBI:58527"/>
        <dbReference type="ChEBI" id="CHEBI:456216"/>
        <dbReference type="EC" id="2.7.1.173"/>
    </reaction>
</comment>
<comment type="pathway">
    <text evidence="2">Cofactor biosynthesis; NAD(+) biosynthesis.</text>
</comment>
<comment type="subunit">
    <text evidence="1">Monomer (By similarity). Interacts with ITGB1 alone or when associated with alpha-7, but not with alpha-5.</text>
</comment>
<comment type="tissue specificity">
    <text evidence="3">Expressed in skeletal muscle (at protein level).</text>
</comment>
<comment type="induction">
    <text evidence="3">Down-regulated during myoblast differentiation.</text>
</comment>
<comment type="similarity">
    <text evidence="4">Belongs to the uridine kinase family. NRK subfamily.</text>
</comment>
<protein>
    <recommendedName>
        <fullName>Nicotinamide riboside kinase 2</fullName>
        <shortName>NRK 2</shortName>
        <shortName>NmR-K 2</shortName>
        <ecNumber evidence="2">2.7.1.22</ecNumber>
    </recommendedName>
    <alternativeName>
        <fullName>Integrin beta-1-binding protein 3</fullName>
    </alternativeName>
    <alternativeName>
        <fullName>Muscle integrin-binding protein</fullName>
        <shortName>MIBP</shortName>
    </alternativeName>
    <alternativeName>
        <fullName>Nicotinic acid riboside kinase 2</fullName>
        <ecNumber evidence="2">2.7.1.173</ecNumber>
    </alternativeName>
    <alternativeName>
        <fullName>Ribosylnicotinamide kinase 2</fullName>
        <shortName>RNK 2</shortName>
    </alternativeName>
    <alternativeName>
        <fullName>Ribosylnicotinic acid kinase 2</fullName>
    </alternativeName>
</protein>
<reference key="1">
    <citation type="journal article" date="2005" name="Science">
        <title>The transcriptional landscape of the mammalian genome.</title>
        <authorList>
            <person name="Carninci P."/>
            <person name="Kasukawa T."/>
            <person name="Katayama S."/>
            <person name="Gough J."/>
            <person name="Frith M.C."/>
            <person name="Maeda N."/>
            <person name="Oyama R."/>
            <person name="Ravasi T."/>
            <person name="Lenhard B."/>
            <person name="Wells C."/>
            <person name="Kodzius R."/>
            <person name="Shimokawa K."/>
            <person name="Bajic V.B."/>
            <person name="Brenner S.E."/>
            <person name="Batalov S."/>
            <person name="Forrest A.R."/>
            <person name="Zavolan M."/>
            <person name="Davis M.J."/>
            <person name="Wilming L.G."/>
            <person name="Aidinis V."/>
            <person name="Allen J.E."/>
            <person name="Ambesi-Impiombato A."/>
            <person name="Apweiler R."/>
            <person name="Aturaliya R.N."/>
            <person name="Bailey T.L."/>
            <person name="Bansal M."/>
            <person name="Baxter L."/>
            <person name="Beisel K.W."/>
            <person name="Bersano T."/>
            <person name="Bono H."/>
            <person name="Chalk A.M."/>
            <person name="Chiu K.P."/>
            <person name="Choudhary V."/>
            <person name="Christoffels A."/>
            <person name="Clutterbuck D.R."/>
            <person name="Crowe M.L."/>
            <person name="Dalla E."/>
            <person name="Dalrymple B.P."/>
            <person name="de Bono B."/>
            <person name="Della Gatta G."/>
            <person name="di Bernardo D."/>
            <person name="Down T."/>
            <person name="Engstrom P."/>
            <person name="Fagiolini M."/>
            <person name="Faulkner G."/>
            <person name="Fletcher C.F."/>
            <person name="Fukushima T."/>
            <person name="Furuno M."/>
            <person name="Futaki S."/>
            <person name="Gariboldi M."/>
            <person name="Georgii-Hemming P."/>
            <person name="Gingeras T.R."/>
            <person name="Gojobori T."/>
            <person name="Green R.E."/>
            <person name="Gustincich S."/>
            <person name="Harbers M."/>
            <person name="Hayashi Y."/>
            <person name="Hensch T.K."/>
            <person name="Hirokawa N."/>
            <person name="Hill D."/>
            <person name="Huminiecki L."/>
            <person name="Iacono M."/>
            <person name="Ikeo K."/>
            <person name="Iwama A."/>
            <person name="Ishikawa T."/>
            <person name="Jakt M."/>
            <person name="Kanapin A."/>
            <person name="Katoh M."/>
            <person name="Kawasawa Y."/>
            <person name="Kelso J."/>
            <person name="Kitamura H."/>
            <person name="Kitano H."/>
            <person name="Kollias G."/>
            <person name="Krishnan S.P."/>
            <person name="Kruger A."/>
            <person name="Kummerfeld S.K."/>
            <person name="Kurochkin I.V."/>
            <person name="Lareau L.F."/>
            <person name="Lazarevic D."/>
            <person name="Lipovich L."/>
            <person name="Liu J."/>
            <person name="Liuni S."/>
            <person name="McWilliam S."/>
            <person name="Madan Babu M."/>
            <person name="Madera M."/>
            <person name="Marchionni L."/>
            <person name="Matsuda H."/>
            <person name="Matsuzawa S."/>
            <person name="Miki H."/>
            <person name="Mignone F."/>
            <person name="Miyake S."/>
            <person name="Morris K."/>
            <person name="Mottagui-Tabar S."/>
            <person name="Mulder N."/>
            <person name="Nakano N."/>
            <person name="Nakauchi H."/>
            <person name="Ng P."/>
            <person name="Nilsson R."/>
            <person name="Nishiguchi S."/>
            <person name="Nishikawa S."/>
            <person name="Nori F."/>
            <person name="Ohara O."/>
            <person name="Okazaki Y."/>
            <person name="Orlando V."/>
            <person name="Pang K.C."/>
            <person name="Pavan W.J."/>
            <person name="Pavesi G."/>
            <person name="Pesole G."/>
            <person name="Petrovsky N."/>
            <person name="Piazza S."/>
            <person name="Reed J."/>
            <person name="Reid J.F."/>
            <person name="Ring B.Z."/>
            <person name="Ringwald M."/>
            <person name="Rost B."/>
            <person name="Ruan Y."/>
            <person name="Salzberg S.L."/>
            <person name="Sandelin A."/>
            <person name="Schneider C."/>
            <person name="Schoenbach C."/>
            <person name="Sekiguchi K."/>
            <person name="Semple C.A."/>
            <person name="Seno S."/>
            <person name="Sessa L."/>
            <person name="Sheng Y."/>
            <person name="Shibata Y."/>
            <person name="Shimada H."/>
            <person name="Shimada K."/>
            <person name="Silva D."/>
            <person name="Sinclair B."/>
            <person name="Sperling S."/>
            <person name="Stupka E."/>
            <person name="Sugiura K."/>
            <person name="Sultana R."/>
            <person name="Takenaka Y."/>
            <person name="Taki K."/>
            <person name="Tammoja K."/>
            <person name="Tan S.L."/>
            <person name="Tang S."/>
            <person name="Taylor M.S."/>
            <person name="Tegner J."/>
            <person name="Teichmann S.A."/>
            <person name="Ueda H.R."/>
            <person name="van Nimwegen E."/>
            <person name="Verardo R."/>
            <person name="Wei C.L."/>
            <person name="Yagi K."/>
            <person name="Yamanishi H."/>
            <person name="Zabarovsky E."/>
            <person name="Zhu S."/>
            <person name="Zimmer A."/>
            <person name="Hide W."/>
            <person name="Bult C."/>
            <person name="Grimmond S.M."/>
            <person name="Teasdale R.D."/>
            <person name="Liu E.T."/>
            <person name="Brusic V."/>
            <person name="Quackenbush J."/>
            <person name="Wahlestedt C."/>
            <person name="Mattick J.S."/>
            <person name="Hume D.A."/>
            <person name="Kai C."/>
            <person name="Sasaki D."/>
            <person name="Tomaru Y."/>
            <person name="Fukuda S."/>
            <person name="Kanamori-Katayama M."/>
            <person name="Suzuki M."/>
            <person name="Aoki J."/>
            <person name="Arakawa T."/>
            <person name="Iida J."/>
            <person name="Imamura K."/>
            <person name="Itoh M."/>
            <person name="Kato T."/>
            <person name="Kawaji H."/>
            <person name="Kawagashira N."/>
            <person name="Kawashima T."/>
            <person name="Kojima M."/>
            <person name="Kondo S."/>
            <person name="Konno H."/>
            <person name="Nakano K."/>
            <person name="Ninomiya N."/>
            <person name="Nishio T."/>
            <person name="Okada M."/>
            <person name="Plessy C."/>
            <person name="Shibata K."/>
            <person name="Shiraki T."/>
            <person name="Suzuki S."/>
            <person name="Tagami M."/>
            <person name="Waki K."/>
            <person name="Watahiki A."/>
            <person name="Okamura-Oho Y."/>
            <person name="Suzuki H."/>
            <person name="Kawai J."/>
            <person name="Hayashizaki Y."/>
        </authorList>
    </citation>
    <scope>NUCLEOTIDE SEQUENCE [LARGE SCALE MRNA]</scope>
    <source>
        <strain>C57BL/6J</strain>
        <tissue>Bone</tissue>
        <tissue>Tongue</tissue>
    </source>
</reference>
<reference key="2">
    <citation type="journal article" date="2004" name="Genome Res.">
        <title>The status, quality, and expansion of the NIH full-length cDNA project: the Mammalian Gene Collection (MGC).</title>
        <authorList>
            <consortium name="The MGC Project Team"/>
        </authorList>
    </citation>
    <scope>NUCLEOTIDE SEQUENCE [LARGE SCALE MRNA]</scope>
    <source>
        <tissue>Brain</tissue>
    </source>
</reference>
<reference key="3">
    <citation type="journal article" date="1999" name="J. Cell Biol.">
        <title>A novel muscle-specific beta 1 integrin binding protein (MIBP) that modulates myogenic differentiation.</title>
        <authorList>
            <person name="Li J."/>
            <person name="Mayne R."/>
            <person name="Wu C."/>
        </authorList>
    </citation>
    <scope>FUNCTION</scope>
    <scope>TISSUE SPECIFICITY</scope>
    <scope>INDUCTION</scope>
</reference>
<feature type="chain" id="PRO_0000215895" description="Nicotinamide riboside kinase 2">
    <location>
        <begin position="1"/>
        <end position="195"/>
    </location>
</feature>
<feature type="active site" description="Proton acceptor" evidence="2">
    <location>
        <position position="35"/>
    </location>
</feature>
<feature type="binding site" evidence="2">
    <location>
        <begin position="9"/>
        <end position="17"/>
    </location>
    <ligand>
        <name>ATP</name>
        <dbReference type="ChEBI" id="CHEBI:30616"/>
    </ligand>
</feature>
<feature type="binding site" evidence="2">
    <location>
        <position position="16"/>
    </location>
    <ligand>
        <name>Mg(2+)</name>
        <dbReference type="ChEBI" id="CHEBI:18420"/>
    </ligand>
</feature>
<feature type="binding site" evidence="2">
    <location>
        <begin position="35"/>
        <end position="38"/>
    </location>
    <ligand>
        <name>substrate</name>
    </ligand>
</feature>
<feature type="binding site" evidence="2">
    <location>
        <position position="35"/>
    </location>
    <ligand>
        <name>Mg(2+)</name>
        <dbReference type="ChEBI" id="CHEBI:18420"/>
    </ligand>
</feature>
<feature type="binding site" evidence="2">
    <location>
        <begin position="54"/>
        <end position="55"/>
    </location>
    <ligand>
        <name>substrate</name>
    </ligand>
</feature>
<feature type="binding site" evidence="2">
    <location>
        <position position="130"/>
    </location>
    <ligand>
        <name>ATP</name>
        <dbReference type="ChEBI" id="CHEBI:30616"/>
    </ligand>
</feature>
<feature type="binding site" evidence="2">
    <location>
        <position position="131"/>
    </location>
    <ligand>
        <name>substrate</name>
    </ligand>
</feature>
<feature type="binding site" evidence="2">
    <location>
        <begin position="134"/>
        <end position="136"/>
    </location>
    <ligand>
        <name>ATP</name>
        <dbReference type="ChEBI" id="CHEBI:30616"/>
    </ligand>
</feature>
<feature type="binding site" evidence="2">
    <location>
        <begin position="136"/>
        <end position="137"/>
    </location>
    <ligand>
        <name>substrate</name>
    </ligand>
</feature>
<feature type="binding site" evidence="2">
    <location>
        <begin position="174"/>
        <end position="176"/>
    </location>
    <ligand>
        <name>ATP</name>
        <dbReference type="ChEBI" id="CHEBI:30616"/>
    </ligand>
</feature>
<accession>Q9D7C9</accession>
<accession>Q0VEG2</accession>
<accession>Q3UV96</accession>
<name>NRK2_MOUSE</name>
<evidence type="ECO:0000250" key="1"/>
<evidence type="ECO:0000250" key="2">
    <source>
        <dbReference type="UniProtKB" id="Q9NWW6"/>
    </source>
</evidence>
<evidence type="ECO:0000269" key="3">
    <source>
    </source>
</evidence>
<evidence type="ECO:0000305" key="4"/>
<proteinExistence type="evidence at protein level"/>